<reference key="1">
    <citation type="journal article" date="2000" name="Science">
        <title>The genome sequence of Drosophila melanogaster.</title>
        <authorList>
            <person name="Adams M.D."/>
            <person name="Celniker S.E."/>
            <person name="Holt R.A."/>
            <person name="Evans C.A."/>
            <person name="Gocayne J.D."/>
            <person name="Amanatides P.G."/>
            <person name="Scherer S.E."/>
            <person name="Li P.W."/>
            <person name="Hoskins R.A."/>
            <person name="Galle R.F."/>
            <person name="George R.A."/>
            <person name="Lewis S.E."/>
            <person name="Richards S."/>
            <person name="Ashburner M."/>
            <person name="Henderson S.N."/>
            <person name="Sutton G.G."/>
            <person name="Wortman J.R."/>
            <person name="Yandell M.D."/>
            <person name="Zhang Q."/>
            <person name="Chen L.X."/>
            <person name="Brandon R.C."/>
            <person name="Rogers Y.-H.C."/>
            <person name="Blazej R.G."/>
            <person name="Champe M."/>
            <person name="Pfeiffer B.D."/>
            <person name="Wan K.H."/>
            <person name="Doyle C."/>
            <person name="Baxter E.G."/>
            <person name="Helt G."/>
            <person name="Nelson C.R."/>
            <person name="Miklos G.L.G."/>
            <person name="Abril J.F."/>
            <person name="Agbayani A."/>
            <person name="An H.-J."/>
            <person name="Andrews-Pfannkoch C."/>
            <person name="Baldwin D."/>
            <person name="Ballew R.M."/>
            <person name="Basu A."/>
            <person name="Baxendale J."/>
            <person name="Bayraktaroglu L."/>
            <person name="Beasley E.M."/>
            <person name="Beeson K.Y."/>
            <person name="Benos P.V."/>
            <person name="Berman B.P."/>
            <person name="Bhandari D."/>
            <person name="Bolshakov S."/>
            <person name="Borkova D."/>
            <person name="Botchan M.R."/>
            <person name="Bouck J."/>
            <person name="Brokstein P."/>
            <person name="Brottier P."/>
            <person name="Burtis K.C."/>
            <person name="Busam D.A."/>
            <person name="Butler H."/>
            <person name="Cadieu E."/>
            <person name="Center A."/>
            <person name="Chandra I."/>
            <person name="Cherry J.M."/>
            <person name="Cawley S."/>
            <person name="Dahlke C."/>
            <person name="Davenport L.B."/>
            <person name="Davies P."/>
            <person name="de Pablos B."/>
            <person name="Delcher A."/>
            <person name="Deng Z."/>
            <person name="Mays A.D."/>
            <person name="Dew I."/>
            <person name="Dietz S.M."/>
            <person name="Dodson K."/>
            <person name="Doup L.E."/>
            <person name="Downes M."/>
            <person name="Dugan-Rocha S."/>
            <person name="Dunkov B.C."/>
            <person name="Dunn P."/>
            <person name="Durbin K.J."/>
            <person name="Evangelista C.C."/>
            <person name="Ferraz C."/>
            <person name="Ferriera S."/>
            <person name="Fleischmann W."/>
            <person name="Fosler C."/>
            <person name="Gabrielian A.E."/>
            <person name="Garg N.S."/>
            <person name="Gelbart W.M."/>
            <person name="Glasser K."/>
            <person name="Glodek A."/>
            <person name="Gong F."/>
            <person name="Gorrell J.H."/>
            <person name="Gu Z."/>
            <person name="Guan P."/>
            <person name="Harris M."/>
            <person name="Harris N.L."/>
            <person name="Harvey D.A."/>
            <person name="Heiman T.J."/>
            <person name="Hernandez J.R."/>
            <person name="Houck J."/>
            <person name="Hostin D."/>
            <person name="Houston K.A."/>
            <person name="Howland T.J."/>
            <person name="Wei M.-H."/>
            <person name="Ibegwam C."/>
            <person name="Jalali M."/>
            <person name="Kalush F."/>
            <person name="Karpen G.H."/>
            <person name="Ke Z."/>
            <person name="Kennison J.A."/>
            <person name="Ketchum K.A."/>
            <person name="Kimmel B.E."/>
            <person name="Kodira C.D."/>
            <person name="Kraft C.L."/>
            <person name="Kravitz S."/>
            <person name="Kulp D."/>
            <person name="Lai Z."/>
            <person name="Lasko P."/>
            <person name="Lei Y."/>
            <person name="Levitsky A.A."/>
            <person name="Li J.H."/>
            <person name="Li Z."/>
            <person name="Liang Y."/>
            <person name="Lin X."/>
            <person name="Liu X."/>
            <person name="Mattei B."/>
            <person name="McIntosh T.C."/>
            <person name="McLeod M.P."/>
            <person name="McPherson D."/>
            <person name="Merkulov G."/>
            <person name="Milshina N.V."/>
            <person name="Mobarry C."/>
            <person name="Morris J."/>
            <person name="Moshrefi A."/>
            <person name="Mount S.M."/>
            <person name="Moy M."/>
            <person name="Murphy B."/>
            <person name="Murphy L."/>
            <person name="Muzny D.M."/>
            <person name="Nelson D.L."/>
            <person name="Nelson D.R."/>
            <person name="Nelson K.A."/>
            <person name="Nixon K."/>
            <person name="Nusskern D.R."/>
            <person name="Pacleb J.M."/>
            <person name="Palazzolo M."/>
            <person name="Pittman G.S."/>
            <person name="Pan S."/>
            <person name="Pollard J."/>
            <person name="Puri V."/>
            <person name="Reese M.G."/>
            <person name="Reinert K."/>
            <person name="Remington K."/>
            <person name="Saunders R.D.C."/>
            <person name="Scheeler F."/>
            <person name="Shen H."/>
            <person name="Shue B.C."/>
            <person name="Siden-Kiamos I."/>
            <person name="Simpson M."/>
            <person name="Skupski M.P."/>
            <person name="Smith T.J."/>
            <person name="Spier E."/>
            <person name="Spradling A.C."/>
            <person name="Stapleton M."/>
            <person name="Strong R."/>
            <person name="Sun E."/>
            <person name="Svirskas R."/>
            <person name="Tector C."/>
            <person name="Turner R."/>
            <person name="Venter E."/>
            <person name="Wang A.H."/>
            <person name="Wang X."/>
            <person name="Wang Z.-Y."/>
            <person name="Wassarman D.A."/>
            <person name="Weinstock G.M."/>
            <person name="Weissenbach J."/>
            <person name="Williams S.M."/>
            <person name="Woodage T."/>
            <person name="Worley K.C."/>
            <person name="Wu D."/>
            <person name="Yang S."/>
            <person name="Yao Q.A."/>
            <person name="Ye J."/>
            <person name="Yeh R.-F."/>
            <person name="Zaveri J.S."/>
            <person name="Zhan M."/>
            <person name="Zhang G."/>
            <person name="Zhao Q."/>
            <person name="Zheng L."/>
            <person name="Zheng X.H."/>
            <person name="Zhong F.N."/>
            <person name="Zhong W."/>
            <person name="Zhou X."/>
            <person name="Zhu S.C."/>
            <person name="Zhu X."/>
            <person name="Smith H.O."/>
            <person name="Gibbs R.A."/>
            <person name="Myers E.W."/>
            <person name="Rubin G.M."/>
            <person name="Venter J.C."/>
        </authorList>
    </citation>
    <scope>NUCLEOTIDE SEQUENCE [LARGE SCALE GENOMIC DNA]</scope>
    <source>
        <strain>Berkeley</strain>
    </source>
</reference>
<reference key="2">
    <citation type="journal article" date="2002" name="Genome Biol.">
        <title>Annotation of the Drosophila melanogaster euchromatic genome: a systematic review.</title>
        <authorList>
            <person name="Misra S."/>
            <person name="Crosby M.A."/>
            <person name="Mungall C.J."/>
            <person name="Matthews B.B."/>
            <person name="Campbell K.S."/>
            <person name="Hradecky P."/>
            <person name="Huang Y."/>
            <person name="Kaminker J.S."/>
            <person name="Millburn G.H."/>
            <person name="Prochnik S.E."/>
            <person name="Smith C.D."/>
            <person name="Tupy J.L."/>
            <person name="Whitfield E.J."/>
            <person name="Bayraktaroglu L."/>
            <person name="Berman B.P."/>
            <person name="Bettencourt B.R."/>
            <person name="Celniker S.E."/>
            <person name="de Grey A.D.N.J."/>
            <person name="Drysdale R.A."/>
            <person name="Harris N.L."/>
            <person name="Richter J."/>
            <person name="Russo S."/>
            <person name="Schroeder A.J."/>
            <person name="Shu S.Q."/>
            <person name="Stapleton M."/>
            <person name="Yamada C."/>
            <person name="Ashburner M."/>
            <person name="Gelbart W.M."/>
            <person name="Rubin G.M."/>
            <person name="Lewis S.E."/>
        </authorList>
    </citation>
    <scope>GENOME REANNOTATION</scope>
    <source>
        <strain>Berkeley</strain>
    </source>
</reference>
<reference key="3">
    <citation type="journal article" date="2002" name="Genome Biol.">
        <title>A Drosophila full-length cDNA resource.</title>
        <authorList>
            <person name="Stapleton M."/>
            <person name="Carlson J.W."/>
            <person name="Brokstein P."/>
            <person name="Yu C."/>
            <person name="Champe M."/>
            <person name="George R.A."/>
            <person name="Guarin H."/>
            <person name="Kronmiller B."/>
            <person name="Pacleb J.M."/>
            <person name="Park S."/>
            <person name="Wan K.H."/>
            <person name="Rubin G.M."/>
            <person name="Celniker S.E."/>
        </authorList>
    </citation>
    <scope>NUCLEOTIDE SEQUENCE [LARGE SCALE MRNA]</scope>
    <source>
        <strain>Berkeley</strain>
        <tissue>Embryo</tissue>
    </source>
</reference>
<accession>Q9VSD7</accession>
<accession>A4V1M7</accession>
<comment type="function">
    <text evidence="3">Cleaves the 2'-5' phosphodiester linkage at the branch point of lariat intron pre-mRNAs after splicing and converts them into linear molecules that are subsequently degraded. It thereby facilitates ribonucleotide turnover.</text>
</comment>
<comment type="cofactor">
    <cofactor evidence="2">
        <name>Fe(2+)</name>
        <dbReference type="ChEBI" id="CHEBI:29033"/>
    </cofactor>
    <cofactor evidence="2">
        <name>Zn(2+)</name>
        <dbReference type="ChEBI" id="CHEBI:29105"/>
    </cofactor>
    <cofactor evidence="3">
        <name>Mn(2+)</name>
        <dbReference type="ChEBI" id="CHEBI:29035"/>
    </cofactor>
    <text evidence="2">Binds 2 divalent metal cations per subunit.</text>
</comment>
<comment type="activity regulation">
    <text evidence="2">Active in presence of diverse metals including Fe(2+), Zn(2+), Mn(2+) (By similarity). Binds two metal cations in two adjacent alpha and beta metal-binding pockets (By similarity).</text>
</comment>
<comment type="subcellular location">
    <subcellularLocation>
        <location evidence="5">Nucleus</location>
    </subcellularLocation>
</comment>
<comment type="similarity">
    <text evidence="5">Belongs to the lariat debranching enzyme family.</text>
</comment>
<gene>
    <name type="primary">ldbr</name>
    <name type="synonym">DBR1</name>
    <name type="ORF">CG7942</name>
</gene>
<evidence type="ECO:0000250" key="1">
    <source>
        <dbReference type="UniProtKB" id="C4M1P9"/>
    </source>
</evidence>
<evidence type="ECO:0000250" key="2">
    <source>
        <dbReference type="UniProtKB" id="P24309"/>
    </source>
</evidence>
<evidence type="ECO:0000250" key="3">
    <source>
        <dbReference type="UniProtKB" id="Q9UK59"/>
    </source>
</evidence>
<evidence type="ECO:0000256" key="4">
    <source>
        <dbReference type="SAM" id="MobiDB-lite"/>
    </source>
</evidence>
<evidence type="ECO:0000305" key="5"/>
<protein>
    <recommendedName>
        <fullName>Lariat debranching enzyme</fullName>
        <shortName>DmDBR1</shortName>
        <ecNumber evidence="3">3.1.4.-</ecNumber>
    </recommendedName>
</protein>
<name>DBR1_DROME</name>
<dbReference type="EC" id="3.1.4.-" evidence="3"/>
<dbReference type="EMBL" id="AE014296">
    <property type="protein sequence ID" value="AAS65055.1"/>
    <property type="molecule type" value="Genomic_DNA"/>
</dbReference>
<dbReference type="EMBL" id="AY119584">
    <property type="protein sequence ID" value="AAM50238.1"/>
    <property type="molecule type" value="mRNA"/>
</dbReference>
<dbReference type="RefSeq" id="NP_996022.1">
    <property type="nucleotide sequence ID" value="NM_206300.2"/>
</dbReference>
<dbReference type="SMR" id="Q9VSD7"/>
<dbReference type="BioGRID" id="64323">
    <property type="interactions" value="4"/>
</dbReference>
<dbReference type="FunCoup" id="Q9VSD7">
    <property type="interactions" value="2177"/>
</dbReference>
<dbReference type="IntAct" id="Q9VSD7">
    <property type="interactions" value="92"/>
</dbReference>
<dbReference type="STRING" id="7227.FBpp0076410"/>
<dbReference type="PaxDb" id="7227-FBpp0076410"/>
<dbReference type="DNASU" id="38900"/>
<dbReference type="EnsemblMetazoa" id="FBtr0076687">
    <property type="protein sequence ID" value="FBpp0076410"/>
    <property type="gene ID" value="FBgn0035838"/>
</dbReference>
<dbReference type="GeneID" id="38900"/>
<dbReference type="KEGG" id="dme:Dmel_CG7942"/>
<dbReference type="AGR" id="FB:FBgn0035838"/>
<dbReference type="CTD" id="38900"/>
<dbReference type="FlyBase" id="FBgn0035838">
    <property type="gene designation" value="ldbr"/>
</dbReference>
<dbReference type="VEuPathDB" id="VectorBase:FBgn0035838"/>
<dbReference type="eggNOG" id="KOG2863">
    <property type="taxonomic scope" value="Eukaryota"/>
</dbReference>
<dbReference type="GeneTree" id="ENSGT00510000047481"/>
<dbReference type="HOGENOM" id="CLU_005893_0_0_1"/>
<dbReference type="InParanoid" id="Q9VSD7"/>
<dbReference type="OMA" id="GIDDPLC"/>
<dbReference type="OrthoDB" id="407609at2759"/>
<dbReference type="PhylomeDB" id="Q9VSD7"/>
<dbReference type="BioGRID-ORCS" id="38900">
    <property type="hits" value="1 hit in 1 CRISPR screen"/>
</dbReference>
<dbReference type="GenomeRNAi" id="38900"/>
<dbReference type="PRO" id="PR:Q9VSD7"/>
<dbReference type="Proteomes" id="UP000000803">
    <property type="component" value="Chromosome 3L"/>
</dbReference>
<dbReference type="Bgee" id="FBgn0035838">
    <property type="expression patterns" value="Expressed in egg chamber and 25 other cell types or tissues"/>
</dbReference>
<dbReference type="GO" id="GO:0005634">
    <property type="term" value="C:nucleus"/>
    <property type="evidence" value="ECO:0000250"/>
    <property type="project" value="UniProtKB"/>
</dbReference>
<dbReference type="GO" id="GO:0046872">
    <property type="term" value="F:metal ion binding"/>
    <property type="evidence" value="ECO:0007669"/>
    <property type="project" value="UniProtKB-KW"/>
</dbReference>
<dbReference type="GO" id="GO:0008419">
    <property type="term" value="F:RNA lariat debranching enzyme activity"/>
    <property type="evidence" value="ECO:0000250"/>
    <property type="project" value="UniProtKB"/>
</dbReference>
<dbReference type="GO" id="GO:0000398">
    <property type="term" value="P:mRNA splicing, via spliceosome"/>
    <property type="evidence" value="ECO:0000318"/>
    <property type="project" value="GO_Central"/>
</dbReference>
<dbReference type="GO" id="GO:0006396">
    <property type="term" value="P:RNA processing"/>
    <property type="evidence" value="ECO:0000250"/>
    <property type="project" value="FlyBase"/>
</dbReference>
<dbReference type="GO" id="GO:0000375">
    <property type="term" value="P:RNA splicing, via transesterification reactions"/>
    <property type="evidence" value="ECO:0000250"/>
    <property type="project" value="UniProtKB"/>
</dbReference>
<dbReference type="CDD" id="cd00844">
    <property type="entry name" value="MPP_Dbr1_N"/>
    <property type="match status" value="1"/>
</dbReference>
<dbReference type="FunFam" id="3.60.21.10:FF:000035">
    <property type="entry name" value="Lariat debranching enzyme"/>
    <property type="match status" value="1"/>
</dbReference>
<dbReference type="Gene3D" id="3.60.21.10">
    <property type="match status" value="1"/>
</dbReference>
<dbReference type="InterPro" id="IPR004843">
    <property type="entry name" value="Calcineurin-like_PHP_ApaH"/>
</dbReference>
<dbReference type="InterPro" id="IPR007708">
    <property type="entry name" value="DBR1_C"/>
</dbReference>
<dbReference type="InterPro" id="IPR041816">
    <property type="entry name" value="Dbr1_N"/>
</dbReference>
<dbReference type="InterPro" id="IPR029052">
    <property type="entry name" value="Metallo-depent_PP-like"/>
</dbReference>
<dbReference type="PANTHER" id="PTHR12849:SF0">
    <property type="entry name" value="LARIAT DEBRANCHING ENZYME"/>
    <property type="match status" value="1"/>
</dbReference>
<dbReference type="PANTHER" id="PTHR12849">
    <property type="entry name" value="RNA LARIAT DEBRANCHING ENZYME"/>
    <property type="match status" value="1"/>
</dbReference>
<dbReference type="Pfam" id="PF05011">
    <property type="entry name" value="DBR1"/>
    <property type="match status" value="1"/>
</dbReference>
<dbReference type="Pfam" id="PF00149">
    <property type="entry name" value="Metallophos"/>
    <property type="match status" value="1"/>
</dbReference>
<dbReference type="SMART" id="SM01124">
    <property type="entry name" value="DBR1"/>
    <property type="match status" value="1"/>
</dbReference>
<dbReference type="SUPFAM" id="SSF56300">
    <property type="entry name" value="Metallo-dependent phosphatases"/>
    <property type="match status" value="1"/>
</dbReference>
<sequence length="534" mass="59462">MKIAVEGCAHGELERIYDTIEGIEKVGGTKIDLLLCCGDFQSTRNLEDLQTMAVPKKYLDMCSFYKYYSGELVAPVLTIFIGGNHEASNYLQELPYGGWVAPNIYYLGYAGVVNVNGVRIAGISGIFKGHDFLRGHHEFPPYTDSTCRSVYHVRQLEVFRLKQISGRVDIFLSHDWPTGIYEYGNKAQLLRKKPFFAADMESGKLGSQPLEELLKAVQPAYWFAAHLHCKFAALVPHNHSQKLGDAESSSSSSSSEDEDEEREKVKKAAPVPPPSKSVPVTKFLALDKCLPRRAFLQVVEVPSDPIEGTPRLEYDAEWLAILHSTNHLISVKENYYYLPGKKAGEFTERSNFTPTEEELEAVTAKFQKLQVPENFERTVPAFDPAEQSDYKHMFVDQPKVQLNPQSNTFCATLGIDDPLCLVLLANGLDLPAVGATECKDRETKSSKLQAVEEDVAEPLVTPTKRKLNLSLPAPTTAAADTTDENVIDLPEEEAEEAIIATETPHVEEPASVPASPNVKKLKRRNQNIYQAQED</sequence>
<keyword id="KW-0378">Hydrolase</keyword>
<keyword id="KW-0408">Iron</keyword>
<keyword id="KW-0464">Manganese</keyword>
<keyword id="KW-0479">Metal-binding</keyword>
<keyword id="KW-0507">mRNA processing</keyword>
<keyword id="KW-0539">Nucleus</keyword>
<keyword id="KW-1185">Reference proteome</keyword>
<keyword id="KW-0862">Zinc</keyword>
<feature type="chain" id="PRO_0000250367" description="Lariat debranching enzyme">
    <location>
        <begin position="1"/>
        <end position="534"/>
    </location>
</feature>
<feature type="region of interest" description="Lariat recognition loop" evidence="1">
    <location>
        <begin position="124"/>
        <end position="154"/>
    </location>
</feature>
<feature type="region of interest" description="Disordered" evidence="4">
    <location>
        <begin position="242"/>
        <end position="275"/>
    </location>
</feature>
<feature type="region of interest" description="Disordered" evidence="4">
    <location>
        <begin position="501"/>
        <end position="534"/>
    </location>
</feature>
<feature type="binding site" evidence="1">
    <location>
        <position position="8"/>
    </location>
    <ligand>
        <name>a divalent metal cation</name>
        <dbReference type="ChEBI" id="CHEBI:60240"/>
        <label>1</label>
    </ligand>
</feature>
<feature type="binding site" evidence="1">
    <location>
        <position position="10"/>
    </location>
    <ligand>
        <name>a divalent metal cation</name>
        <dbReference type="ChEBI" id="CHEBI:60240"/>
        <label>1</label>
    </ligand>
</feature>
<feature type="binding site" evidence="1">
    <location>
        <position position="39"/>
    </location>
    <ligand>
        <name>a divalent metal cation</name>
        <dbReference type="ChEBI" id="CHEBI:60240"/>
        <label>2</label>
    </ligand>
</feature>
<feature type="binding site" evidence="1">
    <location>
        <position position="84"/>
    </location>
    <ligand>
        <name>a divalent metal cation</name>
        <dbReference type="ChEBI" id="CHEBI:60240"/>
        <label>2</label>
    </ligand>
</feature>
<feature type="binding site" evidence="1">
    <location>
        <position position="174"/>
    </location>
    <ligand>
        <name>a divalent metal cation</name>
        <dbReference type="ChEBI" id="CHEBI:60240"/>
        <label>2</label>
    </ligand>
</feature>
<feature type="binding site" evidence="1">
    <location>
        <position position="226"/>
    </location>
    <ligand>
        <name>a divalent metal cation</name>
        <dbReference type="ChEBI" id="CHEBI:60240"/>
        <label>2</label>
    </ligand>
</feature>
<feature type="binding site" evidence="1">
    <location>
        <position position="228"/>
    </location>
    <ligand>
        <name>a divalent metal cation</name>
        <dbReference type="ChEBI" id="CHEBI:60240"/>
        <label>1</label>
    </ligand>
</feature>
<organism>
    <name type="scientific">Drosophila melanogaster</name>
    <name type="common">Fruit fly</name>
    <dbReference type="NCBI Taxonomy" id="7227"/>
    <lineage>
        <taxon>Eukaryota</taxon>
        <taxon>Metazoa</taxon>
        <taxon>Ecdysozoa</taxon>
        <taxon>Arthropoda</taxon>
        <taxon>Hexapoda</taxon>
        <taxon>Insecta</taxon>
        <taxon>Pterygota</taxon>
        <taxon>Neoptera</taxon>
        <taxon>Endopterygota</taxon>
        <taxon>Diptera</taxon>
        <taxon>Brachycera</taxon>
        <taxon>Muscomorpha</taxon>
        <taxon>Ephydroidea</taxon>
        <taxon>Drosophilidae</taxon>
        <taxon>Drosophila</taxon>
        <taxon>Sophophora</taxon>
    </lineage>
</organism>
<proteinExistence type="evidence at transcript level"/>